<accession>Q2GC56</accession>
<feature type="chain" id="PRO_0000325669" description="Uroporphyrinogen decarboxylase">
    <location>
        <begin position="1"/>
        <end position="341"/>
    </location>
</feature>
<feature type="binding site" evidence="1">
    <location>
        <begin position="23"/>
        <end position="27"/>
    </location>
    <ligand>
        <name>substrate</name>
    </ligand>
</feature>
<feature type="binding site" evidence="1">
    <location>
        <position position="73"/>
    </location>
    <ligand>
        <name>substrate</name>
    </ligand>
</feature>
<feature type="binding site" evidence="1">
    <location>
        <position position="147"/>
    </location>
    <ligand>
        <name>substrate</name>
    </ligand>
</feature>
<feature type="binding site" evidence="1">
    <location>
        <position position="202"/>
    </location>
    <ligand>
        <name>substrate</name>
    </ligand>
</feature>
<feature type="binding site" evidence="1">
    <location>
        <position position="318"/>
    </location>
    <ligand>
        <name>substrate</name>
    </ligand>
</feature>
<feature type="site" description="Transition state stabilizer" evidence="1">
    <location>
        <position position="73"/>
    </location>
</feature>
<keyword id="KW-0963">Cytoplasm</keyword>
<keyword id="KW-0210">Decarboxylase</keyword>
<keyword id="KW-0456">Lyase</keyword>
<keyword id="KW-0627">Porphyrin biosynthesis</keyword>
<keyword id="KW-1185">Reference proteome</keyword>
<evidence type="ECO:0000255" key="1">
    <source>
        <dbReference type="HAMAP-Rule" id="MF_00218"/>
    </source>
</evidence>
<gene>
    <name evidence="1" type="primary">hemE</name>
    <name type="ordered locus">Saro_0118</name>
</gene>
<sequence length="341" mass="37181">MPGPLLKTLQGENISRRPIWLMRQAGRYLPEYRELRAEKGGFLALVYDTDAAAEVTVQPIRRFGFDGAILFSDILIVPYAMGQDLQFLAGEGPHLSPRLLDAALNSLVAVPGRLSPIYETVAKVKAQLSPETTLLGFAGSPWTVATYMVAGEGSRDHHDTRALAYRDPSAFQAIIDAITEVTIEYLSGQVEAGAEGLQLFDSWSGSLAPAEFERWVIAPNARIASAMQQRYPHVPVIGFPKGAGEKLSAYARETGVNAVGVDETIDPLWAARELPANMPVQGNLDPLLLLSGGPELERQTIRVLEAFADRPHVFNLGHGIGQHTPIENVEALLKIVRGWSR</sequence>
<organism>
    <name type="scientific">Novosphingobium aromaticivorans (strain ATCC 700278 / DSM 12444 / CCUG 56034 / CIP 105152 / NBRC 16084 / F199)</name>
    <dbReference type="NCBI Taxonomy" id="279238"/>
    <lineage>
        <taxon>Bacteria</taxon>
        <taxon>Pseudomonadati</taxon>
        <taxon>Pseudomonadota</taxon>
        <taxon>Alphaproteobacteria</taxon>
        <taxon>Sphingomonadales</taxon>
        <taxon>Sphingomonadaceae</taxon>
        <taxon>Novosphingobium</taxon>
    </lineage>
</organism>
<protein>
    <recommendedName>
        <fullName evidence="1">Uroporphyrinogen decarboxylase</fullName>
        <shortName evidence="1">UPD</shortName>
        <shortName evidence="1">URO-D</shortName>
        <ecNumber evidence="1">4.1.1.37</ecNumber>
    </recommendedName>
</protein>
<reference key="1">
    <citation type="submission" date="2006-01" db="EMBL/GenBank/DDBJ databases">
        <title>Complete sequence of Novosphingobium aromaticivorans DSM 12444.</title>
        <authorList>
            <consortium name="US DOE Joint Genome Institute"/>
            <person name="Copeland A."/>
            <person name="Lucas S."/>
            <person name="Lapidus A."/>
            <person name="Barry K."/>
            <person name="Detter J.C."/>
            <person name="Glavina T."/>
            <person name="Hammon N."/>
            <person name="Israni S."/>
            <person name="Pitluck S."/>
            <person name="Chain P."/>
            <person name="Malfatti S."/>
            <person name="Shin M."/>
            <person name="Vergez L."/>
            <person name="Schmutz J."/>
            <person name="Larimer F."/>
            <person name="Land M."/>
            <person name="Kyrpides N."/>
            <person name="Ivanova N."/>
            <person name="Fredrickson J."/>
            <person name="Balkwill D."/>
            <person name="Romine M.F."/>
            <person name="Richardson P."/>
        </authorList>
    </citation>
    <scope>NUCLEOTIDE SEQUENCE [LARGE SCALE GENOMIC DNA]</scope>
    <source>
        <strain>ATCC 700278 / DSM 12444 / CCUG 56034 / CIP 105152 / NBRC 16084 / F199</strain>
    </source>
</reference>
<name>DCUP_NOVAD</name>
<dbReference type="EC" id="4.1.1.37" evidence="1"/>
<dbReference type="EMBL" id="CP000248">
    <property type="protein sequence ID" value="ABD24567.1"/>
    <property type="molecule type" value="Genomic_DNA"/>
</dbReference>
<dbReference type="RefSeq" id="WP_011443781.1">
    <property type="nucleotide sequence ID" value="NC_007794.1"/>
</dbReference>
<dbReference type="SMR" id="Q2GC56"/>
<dbReference type="STRING" id="279238.Saro_0118"/>
<dbReference type="KEGG" id="nar:Saro_0118"/>
<dbReference type="eggNOG" id="COG0407">
    <property type="taxonomic scope" value="Bacteria"/>
</dbReference>
<dbReference type="HOGENOM" id="CLU_040933_0_0_5"/>
<dbReference type="UniPathway" id="UPA00251">
    <property type="reaction ID" value="UER00321"/>
</dbReference>
<dbReference type="Proteomes" id="UP000009134">
    <property type="component" value="Chromosome"/>
</dbReference>
<dbReference type="GO" id="GO:0005829">
    <property type="term" value="C:cytosol"/>
    <property type="evidence" value="ECO:0007669"/>
    <property type="project" value="TreeGrafter"/>
</dbReference>
<dbReference type="GO" id="GO:0004853">
    <property type="term" value="F:uroporphyrinogen decarboxylase activity"/>
    <property type="evidence" value="ECO:0007669"/>
    <property type="project" value="UniProtKB-UniRule"/>
</dbReference>
<dbReference type="GO" id="GO:0019353">
    <property type="term" value="P:protoporphyrinogen IX biosynthetic process from glutamate"/>
    <property type="evidence" value="ECO:0007669"/>
    <property type="project" value="TreeGrafter"/>
</dbReference>
<dbReference type="CDD" id="cd00717">
    <property type="entry name" value="URO-D"/>
    <property type="match status" value="1"/>
</dbReference>
<dbReference type="Gene3D" id="3.20.20.210">
    <property type="match status" value="1"/>
</dbReference>
<dbReference type="HAMAP" id="MF_00218">
    <property type="entry name" value="URO_D"/>
    <property type="match status" value="1"/>
</dbReference>
<dbReference type="InterPro" id="IPR038071">
    <property type="entry name" value="UROD/MetE-like_sf"/>
</dbReference>
<dbReference type="InterPro" id="IPR006361">
    <property type="entry name" value="Uroporphyrinogen_deCO2ase_HemE"/>
</dbReference>
<dbReference type="InterPro" id="IPR000257">
    <property type="entry name" value="Uroporphyrinogen_deCOase"/>
</dbReference>
<dbReference type="NCBIfam" id="TIGR01464">
    <property type="entry name" value="hemE"/>
    <property type="match status" value="1"/>
</dbReference>
<dbReference type="PANTHER" id="PTHR21091">
    <property type="entry name" value="METHYLTETRAHYDROFOLATE:HOMOCYSTEINE METHYLTRANSFERASE RELATED"/>
    <property type="match status" value="1"/>
</dbReference>
<dbReference type="PANTHER" id="PTHR21091:SF169">
    <property type="entry name" value="UROPORPHYRINOGEN DECARBOXYLASE"/>
    <property type="match status" value="1"/>
</dbReference>
<dbReference type="Pfam" id="PF01208">
    <property type="entry name" value="URO-D"/>
    <property type="match status" value="1"/>
</dbReference>
<dbReference type="SUPFAM" id="SSF51726">
    <property type="entry name" value="UROD/MetE-like"/>
    <property type="match status" value="1"/>
</dbReference>
<dbReference type="PROSITE" id="PS00906">
    <property type="entry name" value="UROD_1"/>
    <property type="match status" value="1"/>
</dbReference>
<dbReference type="PROSITE" id="PS00907">
    <property type="entry name" value="UROD_2"/>
    <property type="match status" value="1"/>
</dbReference>
<comment type="function">
    <text evidence="1">Catalyzes the decarboxylation of four acetate groups of uroporphyrinogen-III to yield coproporphyrinogen-III.</text>
</comment>
<comment type="catalytic activity">
    <reaction evidence="1">
        <text>uroporphyrinogen III + 4 H(+) = coproporphyrinogen III + 4 CO2</text>
        <dbReference type="Rhea" id="RHEA:19865"/>
        <dbReference type="ChEBI" id="CHEBI:15378"/>
        <dbReference type="ChEBI" id="CHEBI:16526"/>
        <dbReference type="ChEBI" id="CHEBI:57308"/>
        <dbReference type="ChEBI" id="CHEBI:57309"/>
        <dbReference type="EC" id="4.1.1.37"/>
    </reaction>
</comment>
<comment type="pathway">
    <text evidence="1">Porphyrin-containing compound metabolism; protoporphyrin-IX biosynthesis; coproporphyrinogen-III from 5-aminolevulinate: step 4/4.</text>
</comment>
<comment type="subunit">
    <text evidence="1">Homodimer.</text>
</comment>
<comment type="subcellular location">
    <subcellularLocation>
        <location evidence="1">Cytoplasm</location>
    </subcellularLocation>
</comment>
<comment type="similarity">
    <text evidence="1">Belongs to the uroporphyrinogen decarboxylase family.</text>
</comment>
<proteinExistence type="inferred from homology"/>